<name>SCCT_CHLAA</name>
<reference key="1">
    <citation type="journal article" date="2011" name="BMC Genomics">
        <title>Complete genome sequence of the filamentous anoxygenic phototrophic bacterium Chloroflexus aurantiacus.</title>
        <authorList>
            <person name="Tang K.H."/>
            <person name="Barry K."/>
            <person name="Chertkov O."/>
            <person name="Dalin E."/>
            <person name="Han C.S."/>
            <person name="Hauser L.J."/>
            <person name="Honchak B.M."/>
            <person name="Karbach L.E."/>
            <person name="Land M.L."/>
            <person name="Lapidus A."/>
            <person name="Larimer F.W."/>
            <person name="Mikhailova N."/>
            <person name="Pitluck S."/>
            <person name="Pierson B.K."/>
            <person name="Blankenship R.E."/>
        </authorList>
    </citation>
    <scope>NUCLEOTIDE SEQUENCE [LARGE SCALE GENOMIC DNA]</scope>
    <source>
        <strain>ATCC 29366 / DSM 635 / J-10-fl</strain>
    </source>
</reference>
<evidence type="ECO:0000250" key="1"/>
<evidence type="ECO:0000305" key="2"/>
<keyword id="KW-1185">Reference proteome</keyword>
<keyword id="KW-0808">Transferase</keyword>
<sequence length="402" mass="44033">MSSQRPPRPLDDVRVLELGAFLAGPFCGQLLADFGAEVIKVEPPGKGDPMREWGRHRYKGRTLWWPVLARNKKSITIDLRTPEGQALVKRLVPHVDMVLENFRPGTLEEWGLGWEELHALNPGLIMIRVSGFGQTGPYRDKAGFGSIGEAMGGIRAITGFPDRPPTRIGISIGDSLAATFAALGALVALHQRQRSGQGQVVDIGIYEGVLALMESMIPEYQLTGHIRERTGNILPNVAPSNIYPTADGSWFVIGANADTIFTRLAQAMGQPELATDPRFATHQARGEHQAELDDLIAAWTLNYTADQLQVMMDEYGVPAGRIYTAKEMLSDPHFIARQSIIGVHDPDLGEIKMQNVVPRLSATPGGVDWTGPALGQHNREIFTDLLGLTEDDLAMLQAKRVI</sequence>
<organism>
    <name type="scientific">Chloroflexus aurantiacus (strain ATCC 29366 / DSM 635 / J-10-fl)</name>
    <dbReference type="NCBI Taxonomy" id="324602"/>
    <lineage>
        <taxon>Bacteria</taxon>
        <taxon>Bacillati</taxon>
        <taxon>Chloroflexota</taxon>
        <taxon>Chloroflexia</taxon>
        <taxon>Chloroflexales</taxon>
        <taxon>Chloroflexineae</taxon>
        <taxon>Chloroflexaceae</taxon>
        <taxon>Chloroflexus</taxon>
    </lineage>
</organism>
<proteinExistence type="inferred from homology"/>
<protein>
    <recommendedName>
        <fullName>Succinyl-CoA--D-citramalate CoA-transferase</fullName>
        <ecNumber>2.8.3.20</ecNumber>
    </recommendedName>
</protein>
<feature type="chain" id="PRO_0000429590" description="Succinyl-CoA--D-citramalate CoA-transferase">
    <location>
        <begin position="1"/>
        <end position="402"/>
    </location>
</feature>
<feature type="active site" description="Nucleophile" evidence="1">
    <location>
        <position position="174"/>
    </location>
</feature>
<comment type="function">
    <text evidence="1">Involved in the 3-hydroxypropionate cycle used for autotrophic carbon dioxide fixation, and in the glyoxylate assimilation cycle used to regenerate acetyl-CoA and produce pyruvate as universal precursor for biosynthesis. Catalyzes the transfer of CoA moiety from succinyl-CoA to D-citramalate to yield citramalyl-CoA (By similarity).</text>
</comment>
<comment type="catalytic activity">
    <reaction>
        <text>(3R)-citramalate + succinyl-CoA = (3R)-citramalyl-CoA + succinate</text>
        <dbReference type="Rhea" id="RHEA:38279"/>
        <dbReference type="ChEBI" id="CHEBI:30031"/>
        <dbReference type="ChEBI" id="CHEBI:30934"/>
        <dbReference type="ChEBI" id="CHEBI:57292"/>
        <dbReference type="ChEBI" id="CHEBI:75637"/>
        <dbReference type="EC" id="2.8.3.20"/>
    </reaction>
</comment>
<comment type="catalytic activity">
    <reaction>
        <text>(R)-malate + succinyl-CoA = (R)-malyl-CoA + succinate</text>
        <dbReference type="Rhea" id="RHEA:40655"/>
        <dbReference type="ChEBI" id="CHEBI:15588"/>
        <dbReference type="ChEBI" id="CHEBI:30031"/>
        <dbReference type="ChEBI" id="CHEBI:57292"/>
        <dbReference type="ChEBI" id="CHEBI:77427"/>
        <dbReference type="EC" id="2.8.3.20"/>
    </reaction>
</comment>
<comment type="subunit">
    <text evidence="1">Homodimer.</text>
</comment>
<comment type="induction">
    <text evidence="2">Under autotrophic growth conditions.</text>
</comment>
<comment type="similarity">
    <text evidence="2">Belongs to the CoA-transferase III family.</text>
</comment>
<dbReference type="EC" id="2.8.3.20"/>
<dbReference type="EMBL" id="CP000909">
    <property type="protein sequence ID" value="ABY35475.1"/>
    <property type="molecule type" value="Genomic_DNA"/>
</dbReference>
<dbReference type="RefSeq" id="WP_012258129.1">
    <property type="nucleotide sequence ID" value="NC_010175.1"/>
</dbReference>
<dbReference type="RefSeq" id="YP_001635864.1">
    <property type="nucleotide sequence ID" value="NC_010175.1"/>
</dbReference>
<dbReference type="SMR" id="A9WGE3"/>
<dbReference type="STRING" id="324602.Caur_2266"/>
<dbReference type="EnsemblBacteria" id="ABY35475">
    <property type="protein sequence ID" value="ABY35475"/>
    <property type="gene ID" value="Caur_2266"/>
</dbReference>
<dbReference type="KEGG" id="cau:Caur_2266"/>
<dbReference type="PATRIC" id="fig|324602.8.peg.2567"/>
<dbReference type="eggNOG" id="COG1804">
    <property type="taxonomic scope" value="Bacteria"/>
</dbReference>
<dbReference type="HOGENOM" id="CLU_033975_0_0_0"/>
<dbReference type="InParanoid" id="A9WGE3"/>
<dbReference type="Proteomes" id="UP000002008">
    <property type="component" value="Chromosome"/>
</dbReference>
<dbReference type="GO" id="GO:0008410">
    <property type="term" value="F:CoA-transferase activity"/>
    <property type="evidence" value="ECO:0000250"/>
    <property type="project" value="UniProtKB"/>
</dbReference>
<dbReference type="GO" id="GO:0043961">
    <property type="term" value="F:succinyl-CoA:(R)-citramalate CoA-transferase activity"/>
    <property type="evidence" value="ECO:0007669"/>
    <property type="project" value="UniProtKB-EC"/>
</dbReference>
<dbReference type="GO" id="GO:0043427">
    <property type="term" value="P:carbon fixation by 3-hydroxypropionate cycle"/>
    <property type="evidence" value="ECO:0000250"/>
    <property type="project" value="UniProtKB"/>
</dbReference>
<dbReference type="Gene3D" id="3.40.50.10540">
    <property type="entry name" value="Crotonobetainyl-coa:carnitine coa-transferase, domain 1"/>
    <property type="match status" value="1"/>
</dbReference>
<dbReference type="Gene3D" id="3.30.1540.10">
    <property type="entry name" value="formyl-coa transferase, domain 3"/>
    <property type="match status" value="1"/>
</dbReference>
<dbReference type="InterPro" id="IPR050509">
    <property type="entry name" value="CoA-transferase_III"/>
</dbReference>
<dbReference type="InterPro" id="IPR003673">
    <property type="entry name" value="CoA-Trfase_fam_III"/>
</dbReference>
<dbReference type="InterPro" id="IPR044855">
    <property type="entry name" value="CoA-Trfase_III_dom3_sf"/>
</dbReference>
<dbReference type="InterPro" id="IPR023606">
    <property type="entry name" value="CoA-Trfase_III_dom_1_sf"/>
</dbReference>
<dbReference type="PANTHER" id="PTHR48228:SF6">
    <property type="entry name" value="L-CARNITINE COA-TRANSFERASE"/>
    <property type="match status" value="1"/>
</dbReference>
<dbReference type="PANTHER" id="PTHR48228">
    <property type="entry name" value="SUCCINYL-COA--D-CITRAMALATE COA-TRANSFERASE"/>
    <property type="match status" value="1"/>
</dbReference>
<dbReference type="Pfam" id="PF02515">
    <property type="entry name" value="CoA_transf_3"/>
    <property type="match status" value="1"/>
</dbReference>
<dbReference type="SUPFAM" id="SSF89796">
    <property type="entry name" value="CoA-transferase family III (CaiB/BaiF)"/>
    <property type="match status" value="1"/>
</dbReference>
<gene>
    <name type="ordered locus">Caur_2266</name>
</gene>
<accession>A9WGE3</accession>